<sequence length="130" mass="14566">MIGEWNNGTGRRKSSVARVFIKKGTGKITVNDKDIQAFFGRQTSIMICRQPLFLTNHVETFDIMINVHGGGESGQAGAVRHGITRALIDYDATLKPALSQAGFVTRDAREVERKKVGFRSARRRKQFSKR</sequence>
<evidence type="ECO:0000255" key="1">
    <source>
        <dbReference type="HAMAP-Rule" id="MF_00532"/>
    </source>
</evidence>
<evidence type="ECO:0000305" key="2"/>
<accession>A1VJJ4</accession>
<protein>
    <recommendedName>
        <fullName evidence="1">Small ribosomal subunit protein uS9</fullName>
    </recommendedName>
    <alternativeName>
        <fullName evidence="2">30S ribosomal protein S9</fullName>
    </alternativeName>
</protein>
<name>RS9_POLNA</name>
<organism>
    <name type="scientific">Polaromonas naphthalenivorans (strain CJ2)</name>
    <dbReference type="NCBI Taxonomy" id="365044"/>
    <lineage>
        <taxon>Bacteria</taxon>
        <taxon>Pseudomonadati</taxon>
        <taxon>Pseudomonadota</taxon>
        <taxon>Betaproteobacteria</taxon>
        <taxon>Burkholderiales</taxon>
        <taxon>Comamonadaceae</taxon>
        <taxon>Polaromonas</taxon>
    </lineage>
</organism>
<reference key="1">
    <citation type="journal article" date="2009" name="Environ. Microbiol.">
        <title>The genome of Polaromonas naphthalenivorans strain CJ2, isolated from coal tar-contaminated sediment, reveals physiological and metabolic versatility and evolution through extensive horizontal gene transfer.</title>
        <authorList>
            <person name="Yagi J.M."/>
            <person name="Sims D."/>
            <person name="Brettin T."/>
            <person name="Bruce D."/>
            <person name="Madsen E.L."/>
        </authorList>
    </citation>
    <scope>NUCLEOTIDE SEQUENCE [LARGE SCALE GENOMIC DNA]</scope>
    <source>
        <strain>CJ2</strain>
    </source>
</reference>
<comment type="similarity">
    <text evidence="1">Belongs to the universal ribosomal protein uS9 family.</text>
</comment>
<proteinExistence type="inferred from homology"/>
<feature type="chain" id="PRO_1000051281" description="Small ribosomal subunit protein uS9">
    <location>
        <begin position="1"/>
        <end position="130"/>
    </location>
</feature>
<gene>
    <name evidence="1" type="primary">rpsI</name>
    <name type="ordered locus">Pnap_0501</name>
</gene>
<dbReference type="EMBL" id="CP000529">
    <property type="protein sequence ID" value="ABM35822.1"/>
    <property type="molecule type" value="Genomic_DNA"/>
</dbReference>
<dbReference type="RefSeq" id="WP_011799922.1">
    <property type="nucleotide sequence ID" value="NC_008781.1"/>
</dbReference>
<dbReference type="SMR" id="A1VJJ4"/>
<dbReference type="STRING" id="365044.Pnap_0501"/>
<dbReference type="KEGG" id="pna:Pnap_0501"/>
<dbReference type="eggNOG" id="COG0103">
    <property type="taxonomic scope" value="Bacteria"/>
</dbReference>
<dbReference type="HOGENOM" id="CLU_046483_2_1_4"/>
<dbReference type="OrthoDB" id="9803965at2"/>
<dbReference type="Proteomes" id="UP000000644">
    <property type="component" value="Chromosome"/>
</dbReference>
<dbReference type="GO" id="GO:0022627">
    <property type="term" value="C:cytosolic small ribosomal subunit"/>
    <property type="evidence" value="ECO:0007669"/>
    <property type="project" value="TreeGrafter"/>
</dbReference>
<dbReference type="GO" id="GO:0003723">
    <property type="term" value="F:RNA binding"/>
    <property type="evidence" value="ECO:0007669"/>
    <property type="project" value="TreeGrafter"/>
</dbReference>
<dbReference type="GO" id="GO:0003735">
    <property type="term" value="F:structural constituent of ribosome"/>
    <property type="evidence" value="ECO:0007669"/>
    <property type="project" value="InterPro"/>
</dbReference>
<dbReference type="GO" id="GO:0006412">
    <property type="term" value="P:translation"/>
    <property type="evidence" value="ECO:0007669"/>
    <property type="project" value="UniProtKB-UniRule"/>
</dbReference>
<dbReference type="FunFam" id="3.30.230.10:FF:000001">
    <property type="entry name" value="30S ribosomal protein S9"/>
    <property type="match status" value="1"/>
</dbReference>
<dbReference type="Gene3D" id="3.30.230.10">
    <property type="match status" value="1"/>
</dbReference>
<dbReference type="HAMAP" id="MF_00532_B">
    <property type="entry name" value="Ribosomal_uS9_B"/>
    <property type="match status" value="1"/>
</dbReference>
<dbReference type="InterPro" id="IPR020568">
    <property type="entry name" value="Ribosomal_Su5_D2-typ_SF"/>
</dbReference>
<dbReference type="InterPro" id="IPR000754">
    <property type="entry name" value="Ribosomal_uS9"/>
</dbReference>
<dbReference type="InterPro" id="IPR023035">
    <property type="entry name" value="Ribosomal_uS9_bac/plastid"/>
</dbReference>
<dbReference type="InterPro" id="IPR020574">
    <property type="entry name" value="Ribosomal_uS9_CS"/>
</dbReference>
<dbReference type="InterPro" id="IPR014721">
    <property type="entry name" value="Ribsml_uS5_D2-typ_fold_subgr"/>
</dbReference>
<dbReference type="NCBIfam" id="NF001099">
    <property type="entry name" value="PRK00132.1"/>
    <property type="match status" value="1"/>
</dbReference>
<dbReference type="PANTHER" id="PTHR21569">
    <property type="entry name" value="RIBOSOMAL PROTEIN S9"/>
    <property type="match status" value="1"/>
</dbReference>
<dbReference type="PANTHER" id="PTHR21569:SF1">
    <property type="entry name" value="SMALL RIBOSOMAL SUBUNIT PROTEIN US9M"/>
    <property type="match status" value="1"/>
</dbReference>
<dbReference type="Pfam" id="PF00380">
    <property type="entry name" value="Ribosomal_S9"/>
    <property type="match status" value="1"/>
</dbReference>
<dbReference type="SUPFAM" id="SSF54211">
    <property type="entry name" value="Ribosomal protein S5 domain 2-like"/>
    <property type="match status" value="1"/>
</dbReference>
<dbReference type="PROSITE" id="PS00360">
    <property type="entry name" value="RIBOSOMAL_S9"/>
    <property type="match status" value="1"/>
</dbReference>
<keyword id="KW-1185">Reference proteome</keyword>
<keyword id="KW-0687">Ribonucleoprotein</keyword>
<keyword id="KW-0689">Ribosomal protein</keyword>